<gene>
    <name type="primary">HBD</name>
</gene>
<organism>
    <name type="scientific">Saimiri sciureus</name>
    <name type="common">Common squirrel monkey</name>
    <dbReference type="NCBI Taxonomy" id="9521"/>
    <lineage>
        <taxon>Eukaryota</taxon>
        <taxon>Metazoa</taxon>
        <taxon>Chordata</taxon>
        <taxon>Craniata</taxon>
        <taxon>Vertebrata</taxon>
        <taxon>Euteleostomi</taxon>
        <taxon>Mammalia</taxon>
        <taxon>Eutheria</taxon>
        <taxon>Euarchontoglires</taxon>
        <taxon>Primates</taxon>
        <taxon>Haplorrhini</taxon>
        <taxon>Platyrrhini</taxon>
        <taxon>Cebidae</taxon>
        <taxon>Saimiriinae</taxon>
        <taxon>Saimiri</taxon>
    </lineage>
</organism>
<keyword id="KW-0903">Direct protein sequencing</keyword>
<keyword id="KW-0349">Heme</keyword>
<keyword id="KW-0408">Iron</keyword>
<keyword id="KW-0479">Metal-binding</keyword>
<keyword id="KW-0561">Oxygen transport</keyword>
<keyword id="KW-0597">Phosphoprotein</keyword>
<keyword id="KW-0813">Transport</keyword>
<feature type="chain" id="PRO_0000053173" description="Hemoglobin subunit delta">
    <location>
        <begin position="1"/>
        <end position="146"/>
    </location>
</feature>
<feature type="domain" description="Globin" evidence="2">
    <location>
        <begin position="2"/>
        <end position="146"/>
    </location>
</feature>
<feature type="binding site" description="distal binding residue">
    <location>
        <position position="63"/>
    </location>
    <ligand>
        <name>heme b</name>
        <dbReference type="ChEBI" id="CHEBI:60344"/>
    </ligand>
    <ligandPart>
        <name>Fe</name>
        <dbReference type="ChEBI" id="CHEBI:18248"/>
    </ligandPart>
</feature>
<feature type="binding site" description="proximal binding residue">
    <location>
        <position position="92"/>
    </location>
    <ligand>
        <name>heme b</name>
        <dbReference type="ChEBI" id="CHEBI:60344"/>
    </ligand>
    <ligandPart>
        <name>Fe</name>
        <dbReference type="ChEBI" id="CHEBI:18248"/>
    </ligandPart>
</feature>
<feature type="modified residue" description="Phosphoserine" evidence="1">
    <location>
        <position position="50"/>
    </location>
</feature>
<feature type="sequence variant" description="In allelic sequence.">
    <original>E</original>
    <variation>Q</variation>
    <location>
        <position position="121"/>
    </location>
</feature>
<reference key="1">
    <citation type="journal article" date="1971" name="Biochem. Genet.">
        <title>Primate hemoglobins: some sequences and some proposals concerning the character of evolution and mutation.</title>
        <authorList>
            <person name="Boyer S.H."/>
            <person name="Crosby E.F."/>
            <person name="Noyes A.N."/>
            <person name="Fuller G.F."/>
            <person name="Leslie S.E."/>
            <person name="Donaldson L.J."/>
            <person name="Vrablik G.R."/>
            <person name="Schaefer E.W. Jr."/>
            <person name="Thurmon T.F."/>
        </authorList>
    </citation>
    <scope>PROTEIN SEQUENCE</scope>
</reference>
<accession>P02047</accession>
<comment type="subunit">
    <text>Heterotetramer of two delta chains and two alpha chains.</text>
</comment>
<comment type="tissue specificity">
    <text>Red blood cells.</text>
</comment>
<comment type="miscellaneous">
    <text>It is possible that A-12 be S-12 and S-16 be G-16.</text>
</comment>
<comment type="miscellaneous">
    <text>It is possible that A-51 be P-51 and P-58 be A-58.</text>
</comment>
<comment type="similarity">
    <text evidence="2">Belongs to the globin family.</text>
</comment>
<sequence length="146" mass="15754">VHLTGDEKSAVAALWSKVNVDEVGGEALGRLLVVYPWTQRFFESFGALSSADAVMGNPKVKAHGKKVLGAFSDGLAHLDNLKGTFAQLSELHCDKLHVDPENFRLLGNVLVCVLARNFGKEFTPQVQAAFQKVVAGVATALAHKYH</sequence>
<name>HBD_SAISC</name>
<protein>
    <recommendedName>
        <fullName>Hemoglobin subunit delta</fullName>
    </recommendedName>
    <alternativeName>
        <fullName>Delta-globin</fullName>
    </alternativeName>
    <alternativeName>
        <fullName>Hemoglobin delta chain</fullName>
    </alternativeName>
</protein>
<dbReference type="PIR" id="G02365">
    <property type="entry name" value="HDMKSQ"/>
</dbReference>
<dbReference type="SMR" id="P02047"/>
<dbReference type="GO" id="GO:0072562">
    <property type="term" value="C:blood microparticle"/>
    <property type="evidence" value="ECO:0007669"/>
    <property type="project" value="TreeGrafter"/>
</dbReference>
<dbReference type="GO" id="GO:0031838">
    <property type="term" value="C:haptoglobin-hemoglobin complex"/>
    <property type="evidence" value="ECO:0007669"/>
    <property type="project" value="TreeGrafter"/>
</dbReference>
<dbReference type="GO" id="GO:0005833">
    <property type="term" value="C:hemoglobin complex"/>
    <property type="evidence" value="ECO:0007669"/>
    <property type="project" value="InterPro"/>
</dbReference>
<dbReference type="GO" id="GO:0031720">
    <property type="term" value="F:haptoglobin binding"/>
    <property type="evidence" value="ECO:0007669"/>
    <property type="project" value="TreeGrafter"/>
</dbReference>
<dbReference type="GO" id="GO:0020037">
    <property type="term" value="F:heme binding"/>
    <property type="evidence" value="ECO:0007669"/>
    <property type="project" value="InterPro"/>
</dbReference>
<dbReference type="GO" id="GO:0031721">
    <property type="term" value="F:hemoglobin alpha binding"/>
    <property type="evidence" value="ECO:0007669"/>
    <property type="project" value="TreeGrafter"/>
</dbReference>
<dbReference type="GO" id="GO:0046872">
    <property type="term" value="F:metal ion binding"/>
    <property type="evidence" value="ECO:0007669"/>
    <property type="project" value="UniProtKB-KW"/>
</dbReference>
<dbReference type="GO" id="GO:0043177">
    <property type="term" value="F:organic acid binding"/>
    <property type="evidence" value="ECO:0007669"/>
    <property type="project" value="TreeGrafter"/>
</dbReference>
<dbReference type="GO" id="GO:0019825">
    <property type="term" value="F:oxygen binding"/>
    <property type="evidence" value="ECO:0007669"/>
    <property type="project" value="InterPro"/>
</dbReference>
<dbReference type="GO" id="GO:0005344">
    <property type="term" value="F:oxygen carrier activity"/>
    <property type="evidence" value="ECO:0007669"/>
    <property type="project" value="UniProtKB-KW"/>
</dbReference>
<dbReference type="GO" id="GO:0004601">
    <property type="term" value="F:peroxidase activity"/>
    <property type="evidence" value="ECO:0007669"/>
    <property type="project" value="TreeGrafter"/>
</dbReference>
<dbReference type="GO" id="GO:0042744">
    <property type="term" value="P:hydrogen peroxide catabolic process"/>
    <property type="evidence" value="ECO:0007669"/>
    <property type="project" value="TreeGrafter"/>
</dbReference>
<dbReference type="CDD" id="cd08925">
    <property type="entry name" value="Hb-beta-like"/>
    <property type="match status" value="1"/>
</dbReference>
<dbReference type="FunFam" id="1.10.490.10:FF:000001">
    <property type="entry name" value="Hemoglobin subunit beta"/>
    <property type="match status" value="1"/>
</dbReference>
<dbReference type="Gene3D" id="1.10.490.10">
    <property type="entry name" value="Globins"/>
    <property type="match status" value="1"/>
</dbReference>
<dbReference type="InterPro" id="IPR000971">
    <property type="entry name" value="Globin"/>
</dbReference>
<dbReference type="InterPro" id="IPR009050">
    <property type="entry name" value="Globin-like_sf"/>
</dbReference>
<dbReference type="InterPro" id="IPR012292">
    <property type="entry name" value="Globin/Proto"/>
</dbReference>
<dbReference type="InterPro" id="IPR002337">
    <property type="entry name" value="Hemoglobin_b"/>
</dbReference>
<dbReference type="InterPro" id="IPR050056">
    <property type="entry name" value="Hemoglobin_oxygen_transport"/>
</dbReference>
<dbReference type="PANTHER" id="PTHR11442">
    <property type="entry name" value="HEMOGLOBIN FAMILY MEMBER"/>
    <property type="match status" value="1"/>
</dbReference>
<dbReference type="PANTHER" id="PTHR11442:SF42">
    <property type="entry name" value="HEMOGLOBIN SUBUNIT BETA"/>
    <property type="match status" value="1"/>
</dbReference>
<dbReference type="Pfam" id="PF00042">
    <property type="entry name" value="Globin"/>
    <property type="match status" value="1"/>
</dbReference>
<dbReference type="PRINTS" id="PR00814">
    <property type="entry name" value="BETAHAEM"/>
</dbReference>
<dbReference type="SUPFAM" id="SSF46458">
    <property type="entry name" value="Globin-like"/>
    <property type="match status" value="1"/>
</dbReference>
<dbReference type="PROSITE" id="PS01033">
    <property type="entry name" value="GLOBIN"/>
    <property type="match status" value="1"/>
</dbReference>
<evidence type="ECO:0000250" key="1">
    <source>
        <dbReference type="UniProtKB" id="P02042"/>
    </source>
</evidence>
<evidence type="ECO:0000255" key="2">
    <source>
        <dbReference type="PROSITE-ProRule" id="PRU00238"/>
    </source>
</evidence>
<proteinExistence type="evidence at protein level"/>